<reference key="1">
    <citation type="journal article" date="1993" name="J. Biol. Chem.">
        <title>Molecular analysis of human beta-arrestin-1: cloning, tissue distribution, and regulation of expression. Identification of two isoforms generated by alternative splicing.</title>
        <authorList>
            <person name="Parruti G."/>
            <person name="Peracchia F."/>
            <person name="Sallese M."/>
            <person name="Ambrosini G."/>
            <person name="Masini M."/>
            <person name="Rotilio D."/>
            <person name="de Blasi A."/>
        </authorList>
    </citation>
    <scope>NUCLEOTIDE SEQUENCE [MRNA] (ISOFORMS 1A AND 1B)</scope>
    <source>
        <tissue>Peripheral blood</tissue>
    </source>
</reference>
<reference key="2">
    <citation type="submission" date="1998-08" db="EMBL/GenBank/DDBJ databases">
        <title>Molecular cloning of two isoforms of human beta-arrestin 1.</title>
        <authorList>
            <person name="Yu Q.M."/>
            <person name="Zhou T.H."/>
            <person name="Cheng Z.J."/>
            <person name="Ma L."/>
            <person name="Pei G."/>
        </authorList>
    </citation>
    <scope>NUCLEOTIDE SEQUENCE [MRNA] (ISOFORMS 1A AND 1B)</scope>
    <source>
        <tissue>Brain</tissue>
    </source>
</reference>
<reference key="3">
    <citation type="submission" date="2005-12" db="EMBL/GenBank/DDBJ databases">
        <authorList>
            <consortium name="NHLBI resequencing and genotyping service (RS&amp;G)"/>
        </authorList>
    </citation>
    <scope>NUCLEOTIDE SEQUENCE [GENOMIC DNA]</scope>
</reference>
<reference key="4">
    <citation type="submission" date="2008-10" db="EMBL/GenBank/DDBJ databases">
        <title>Isolation of cDNA coding for Homo sapiens arrestin, beta 1 (ARRB1), transcript variant 2.</title>
        <authorList>
            <person name="Kaighin V.A."/>
            <person name="Martin A.L."/>
            <person name="Aronstam R.S."/>
        </authorList>
    </citation>
    <scope>NUCLEOTIDE SEQUENCE [MRNA] (ISOFORM 1B)</scope>
    <source>
        <tissue>Lung</tissue>
    </source>
</reference>
<reference key="5">
    <citation type="submission" date="2005-07" db="EMBL/GenBank/DDBJ databases">
        <authorList>
            <person name="Mural R.J."/>
            <person name="Istrail S."/>
            <person name="Sutton G.G."/>
            <person name="Florea L."/>
            <person name="Halpern A.L."/>
            <person name="Mobarry C.M."/>
            <person name="Lippert R."/>
            <person name="Walenz B."/>
            <person name="Shatkay H."/>
            <person name="Dew I."/>
            <person name="Miller J.R."/>
            <person name="Flanigan M.J."/>
            <person name="Edwards N.J."/>
            <person name="Bolanos R."/>
            <person name="Fasulo D."/>
            <person name="Halldorsson B.V."/>
            <person name="Hannenhalli S."/>
            <person name="Turner R."/>
            <person name="Yooseph S."/>
            <person name="Lu F."/>
            <person name="Nusskern D.R."/>
            <person name="Shue B.C."/>
            <person name="Zheng X.H."/>
            <person name="Zhong F."/>
            <person name="Delcher A.L."/>
            <person name="Huson D.H."/>
            <person name="Kravitz S.A."/>
            <person name="Mouchard L."/>
            <person name="Reinert K."/>
            <person name="Remington K.A."/>
            <person name="Clark A.G."/>
            <person name="Waterman M.S."/>
            <person name="Eichler E.E."/>
            <person name="Adams M.D."/>
            <person name="Hunkapiller M.W."/>
            <person name="Myers E.W."/>
            <person name="Venter J.C."/>
        </authorList>
    </citation>
    <scope>NUCLEOTIDE SEQUENCE [LARGE SCALE GENOMIC DNA]</scope>
</reference>
<reference key="6">
    <citation type="journal article" date="2004" name="Genome Res.">
        <title>The status, quality, and expansion of the NIH full-length cDNA project: the Mammalian Gene Collection (MGC).</title>
        <authorList>
            <consortium name="The MGC Project Team"/>
        </authorList>
    </citation>
    <scope>NUCLEOTIDE SEQUENCE [LARGE SCALE MRNA] (ISOFORM 1A)</scope>
    <source>
        <tissue>Uterus</tissue>
    </source>
</reference>
<reference key="7">
    <citation type="journal article" date="1998" name="Proc. Natl. Acad. Sci. U.S.A.">
        <title>Monocyte chemoattractant protein-1-induced CCR2B receptor desensitization mediated by the G protein-coupled receptor kinase 2.</title>
        <authorList>
            <person name="Aragay A.M."/>
            <person name="Mellado M."/>
            <person name="Frade J.M."/>
            <person name="Martin A.M."/>
            <person name="Jimenez-Sainz M.C."/>
            <person name="Martinez-A C."/>
            <person name="Mayor F. Jr."/>
        </authorList>
    </citation>
    <scope>INTERACTION WITH CCR2 AND GRK2</scope>
</reference>
<reference key="8">
    <citation type="journal article" date="1999" name="J. Biol. Chem.">
        <title>Targeted construction of phosphorylation-independent beta-arrestin mutants with constitutive activity in cells.</title>
        <authorList>
            <person name="Kovoor A."/>
            <person name="Celver J."/>
            <person name="Abdryashitov R.I."/>
            <person name="Chavkin C."/>
            <person name="Gurevich V.V."/>
        </authorList>
    </citation>
    <scope>MUTAGENESIS OF ARG-169</scope>
</reference>
<reference key="9">
    <citation type="journal article" date="1999" name="Science">
        <title>Beta-arrestin-dependent formation of beta2 adrenergic receptor-Src protein kinase complexes.</title>
        <authorList>
            <person name="Luttrell L.M."/>
            <person name="Ferguson S.S.G."/>
            <person name="Daaka Y."/>
            <person name="Miller W.E."/>
            <person name="Maudsley S."/>
            <person name="Della Rocca G.J."/>
            <person name="Lin F.-T."/>
            <person name="Kawakatsu H."/>
            <person name="Owada K."/>
            <person name="Luttrell D.K."/>
            <person name="Caron M.G."/>
            <person name="Lefkowitz R.J."/>
        </authorList>
    </citation>
    <scope>INTERACTION WITH ADRB2</scope>
    <scope>SUBCELLULAR LOCATION</scope>
</reference>
<reference key="10">
    <citation type="journal article" date="2000" name="J. Biol. Chem.">
        <title>Differential affinities of visual arrestin, beta arrestin1, and beta arrestin2 for G protein-coupled receptors delineate two major classes of receptors.</title>
        <authorList>
            <person name="Oakley R.H."/>
            <person name="Laporte S.A."/>
            <person name="Holt J.A."/>
            <person name="Caron M.G."/>
            <person name="Barak L.S."/>
        </authorList>
    </citation>
    <scope>SUBCELLULAR LOCATION</scope>
    <scope>ASSOCIATION WITH ANTAGONIST-STIMULATED GPCRS</scope>
</reference>
<reference key="11">
    <citation type="journal article" date="2000" name="Nat. Immunol.">
        <title>Regulation of tyrosine kinase activation and granule release through beta-arrestin by CXCRI.</title>
        <authorList>
            <person name="Barlic J."/>
            <person name="Andrews J.D."/>
            <person name="Kelvin A.A."/>
            <person name="Bosinger S.E."/>
            <person name="DeVries M.E."/>
            <person name="Xu L."/>
            <person name="Dobransky T."/>
            <person name="Feldman R.D."/>
            <person name="Ferguson S.S."/>
            <person name="Kelvin D.J."/>
        </authorList>
    </citation>
    <scope>INTERACTION WITH HCK AND CXCR1</scope>
</reference>
<reference key="12">
    <citation type="journal article" date="2003" name="J. Biol. Chem.">
        <title>Phosphorylation of key serine residues is required for internalization of the complement 5a (C5a) anaphylatoxin receptor via a beta-arrestin, dynamin, and clathrin-dependent pathway.</title>
        <authorList>
            <person name="Braun L."/>
            <person name="Christophe T."/>
            <person name="Boulay F."/>
        </authorList>
    </citation>
    <scope>FUNCTION IN INTERNALIZATION OF C5AR1</scope>
    <scope>SUBCELLULAR LOCATION</scope>
    <scope>INTERACTION WITH C5AR1</scope>
</reference>
<reference key="13">
    <citation type="journal article" date="2005" name="J. Biol. Chem.">
        <title>{beta}-Arrestin is crucial for ubiquitination and down-regulation of the insulin-like growth factor-1 receptor by acting as adaptor for the MDM2 E3 ligase.</title>
        <authorList>
            <person name="Girnita L."/>
            <person name="Shenoy S.K."/>
            <person name="Sehat B."/>
            <person name="Vasilcanu R."/>
            <person name="Girnita A."/>
            <person name="Lefkowitz R.J."/>
            <person name="Larsson O."/>
        </authorList>
    </citation>
    <scope>FUNCTION IN UBIQUITINATION OF IGF1R</scope>
    <scope>INTERACTION WITH IGF1R AND MDM2</scope>
</reference>
<reference key="14">
    <citation type="journal article" date="2004" name="J. Biol. Chem.">
        <title>Reciprocal regulation of angiotensin receptor-activated extracellular signal-regulated kinases by beta-arrestins 1 and 2.</title>
        <authorList>
            <person name="Ahn S."/>
            <person name="Wei H."/>
            <person name="Garrison T.R."/>
            <person name="Lefkowitz R.J."/>
        </authorList>
    </citation>
    <scope>FUNCTION IN AGTR1-MEDIATED ERK SIGNALING</scope>
</reference>
<reference key="15">
    <citation type="journal article" date="2005" name="Cell">
        <title>A nuclear function of beta-arrestin1 in GPCR signaling: regulation of histone acetylation and gene transcription.</title>
        <authorList>
            <person name="Kang J."/>
            <person name="Shi Y."/>
            <person name="Xiang B."/>
            <person name="Qu B."/>
            <person name="Su W."/>
            <person name="Zhu M."/>
            <person name="Zhang M."/>
            <person name="Bao G."/>
            <person name="Wang F."/>
            <person name="Zhang X."/>
            <person name="Yang R."/>
            <person name="Fan F."/>
            <person name="Chen X."/>
            <person name="Pei G."/>
            <person name="Ma L."/>
        </authorList>
    </citation>
    <scope>NUCLEAR FUNCTION IN TRANSCRIPTIONAL REGULATION</scope>
    <scope>SUBCELLULAR LOCATION</scope>
    <scope>INTERACTION WITH CREB1</scope>
</reference>
<reference key="16">
    <citation type="journal article" date="2005" name="J. Biol. Chem.">
        <title>beta-Arrestin 1 and Galphaq/11 coordinately activate RhoA and stress fiber formation following receptor stimulation.</title>
        <authorList>
            <person name="Barnes W.G."/>
            <person name="Reiter E."/>
            <person name="Violin J.D."/>
            <person name="Ren X.-R."/>
            <person name="Milligan G."/>
            <person name="Lefkowitz R.J."/>
        </authorList>
    </citation>
    <scope>FUNCTION IN CYTOSKELETAL REARRANGEMENT</scope>
    <scope>SUBCELLULAR LOCATION</scope>
</reference>
<reference key="17">
    <citation type="journal article" date="2005" name="J. Biol. Chem.">
        <title>G protein-coupled receptor kinases promote phosphorylation and beta-arrestin-mediated internalization of CCR5 homo- and hetero-oligomers.</title>
        <authorList>
            <person name="Huettenrauch F."/>
            <person name="Pollok-Kopp B."/>
            <person name="Oppermann M."/>
        </authorList>
    </citation>
    <scope>FUNCTION IN INTERNALIZATION OF CCR5</scope>
    <scope>INTERACTION WITH CCR5</scope>
</reference>
<reference key="18">
    <citation type="journal article" date="2005" name="Mol. Pharmacol.">
        <title>Multiple independent functions of arrestins in the regulation of protease-activated receptor-2 signaling and trafficking.</title>
        <authorList>
            <person name="Stalheim L."/>
            <person name="Ding Y."/>
            <person name="Gullapalli A."/>
            <person name="Paing M.M."/>
            <person name="Wolfe B.L."/>
            <person name="Morris D.R."/>
            <person name="Trejo J."/>
        </authorList>
    </citation>
    <scope>FUNCTION IN F2LR1-MEDIATED ERK SIGNALING</scope>
    <scope>SUBCELLULAR LOCATION</scope>
</reference>
<reference key="19">
    <citation type="journal article" date="2005" name="Proc. Natl. Acad. Sci. U.S.A.">
        <title>Different G protein-coupled receptor kinases govern G protein and beta-arrestin-mediated signaling of V2 vasopressin receptor.</title>
        <authorList>
            <person name="Ren X.-R."/>
            <person name="Reiter E."/>
            <person name="Ahn S."/>
            <person name="Kim J."/>
            <person name="Chen W."/>
            <person name="Lefkowitz R.J."/>
        </authorList>
    </citation>
    <scope>FUNCTION IN AVPR2-MEDIATED ERK SIGNALING</scope>
</reference>
<reference key="20">
    <citation type="journal article" date="2006" name="Dev. Cell">
        <title>Molecular switches involving the AP-2 beta2 appendage regulate endocytic cargo selection and clathrin coat assembly.</title>
        <authorList>
            <person name="Edeling M.A."/>
            <person name="Mishra S.K."/>
            <person name="Keyel P.A."/>
            <person name="Steinhauser A.L."/>
            <person name="Collins B.M."/>
            <person name="Roth R."/>
            <person name="Heuser J.E."/>
            <person name="Owen D.J."/>
            <person name="Traub L.M."/>
        </authorList>
    </citation>
    <scope>INTERACTION WITH AP2B1</scope>
    <scope>MUTAGENESIS OF PHE-388; ASP-390 AND ARG-393</scope>
</reference>
<reference key="21">
    <citation type="journal article" date="2006" name="J. Biol. Chem.">
        <title>beta-arrestin-dependent, G protein-independent ERK1/2 activation by the beta2 adrenergic receptor.</title>
        <authorList>
            <person name="Shenoy S.K."/>
            <person name="Drake M.T."/>
            <person name="Nelson C.D."/>
            <person name="Houtz D.A."/>
            <person name="Xiao K."/>
            <person name="Madabushi S."/>
            <person name="Reiter E."/>
            <person name="Premont R.T."/>
            <person name="Lichtarge O."/>
            <person name="Lefkowitz R.J."/>
        </authorList>
    </citation>
    <scope>FUNCTION IN ADRB2-MEDIATED ERK SIGNALING</scope>
    <scope>SUBCELLULAR LOCATION</scope>
</reference>
<reference key="22">
    <citation type="journal article" date="2006" name="J. Biol. Chem.">
        <title>Distinct beta-arrestin- and G protein-dependent pathways for parathyroid hormone receptor-stimulated ERK1/2 activation.</title>
        <authorList>
            <person name="Gesty-Palmer D."/>
            <person name="Chen M."/>
            <person name="Reiter E."/>
            <person name="Ahn S."/>
            <person name="Nelson C.D."/>
            <person name="Wang S."/>
            <person name="Eckhardt A.E."/>
            <person name="Cowan C.L."/>
            <person name="Spurney R.F."/>
            <person name="Luttrell L.M."/>
            <person name="Lefkowitz R.J."/>
        </authorList>
    </citation>
    <scope>FUNCTION IN PTH1R-MEDIATED ERK SIGNALING</scope>
</reference>
<reference key="23">
    <citation type="journal article" date="2006" name="J. Immunol.">
        <title>Platelet-activating factor-induced clathrin-mediated endocytosis requires beta-arrestin-1 recruitment and activation of the p38 MAPK signalosome at the plasma membrane for actin bundle formation.</title>
        <authorList>
            <person name="McLaughlin N.J."/>
            <person name="Banerjee A."/>
            <person name="Kelher M.R."/>
            <person name="Gamboni-Robertson F."/>
            <person name="Hamiel C."/>
            <person name="Sheppard F.R."/>
            <person name="Moore E.E."/>
            <person name="Silliman C.C."/>
        </authorList>
    </citation>
    <scope>FUNCTION IN INTERNALIZATION OF PTAFR</scope>
    <scope>FUNCTION IN THE P38 MAPK SIGNALING PATHWAY</scope>
    <scope>FUNCTION IN ACTIN BUNDLE FORMATION</scope>
    <scope>SUBCELLULAR LOCATION</scope>
    <scope>INTERACTION WITH PTAFR AND MAP2K3</scope>
</reference>
<reference key="24">
    <citation type="journal article" date="2006" name="Nat. Immunol.">
        <title>Association of beta-arrestin and TRAF6 negatively regulates Toll-like receptor-interleukin 1 receptor signaling.</title>
        <authorList>
            <person name="Wang Y."/>
            <person name="Tang Y."/>
            <person name="Teng L."/>
            <person name="Wu Y."/>
            <person name="Zhao X."/>
            <person name="Pei G."/>
        </authorList>
    </citation>
    <scope>FUNCTION IN TLR/IL-1 RECEPTOR SIGNALING</scope>
    <scope>INTERACTION WITH TRAF6</scope>
</reference>
<reference key="25">
    <citation type="journal article" date="2006" name="Pigment Cell Res.">
        <title>The melanosomal/lysosomal protein OA1 has properties of a G protein-coupled receptor.</title>
        <authorList>
            <person name="Innamorati G."/>
            <person name="Piccirillo R."/>
            <person name="Bagnato P."/>
            <person name="Palmisano I."/>
            <person name="Schiaffino M.V."/>
        </authorList>
    </citation>
    <scope>INTERACTION WITH GPR143</scope>
</reference>
<reference key="26">
    <citation type="journal article" date="2007" name="J. Cell Sci.">
        <title>Src-dependent phosphorylation of beta2-adaptin dissociates the beta-arrestin-AP-2 complex.</title>
        <authorList>
            <person name="Fessart D."/>
            <person name="Simaan M."/>
            <person name="Zimmerman B."/>
            <person name="Comeau J."/>
            <person name="Hamdan F.F."/>
            <person name="Wiseman P.W."/>
            <person name="Bouvier M."/>
            <person name="Laporte S.A."/>
        </authorList>
    </citation>
    <scope>INTERACTION WITH AP2B1</scope>
</reference>
<reference key="27">
    <citation type="journal article" date="2008" name="FASEB J.">
        <title>Beta-arrestins specifically constrain beta2-adrenergic receptor signaling and function in airway smooth muscle.</title>
        <authorList>
            <person name="Deshpande D.A."/>
            <person name="Theriot B.S."/>
            <person name="Penn R.B."/>
            <person name="Walker J.K."/>
        </authorList>
    </citation>
    <scope>FUNCTION IN BETA-ADRENERGIC RECEPTOR REGULATION</scope>
</reference>
<reference key="28">
    <citation type="journal article" date="2008" name="J. Neurochem.">
        <title>Post-endocytic fates of delta-opioid receptor are regulated by GRK2-mediated receptor phosphorylation and distinct beta-arrestin isoforms.</title>
        <authorList>
            <person name="Zhang X."/>
            <person name="Wang F."/>
            <person name="Chen X."/>
            <person name="Chen Y."/>
            <person name="Ma L."/>
        </authorList>
    </citation>
    <scope>FUNCTION IN INTERNALIZATION OF OPRD1</scope>
</reference>
<reference key="29">
    <citation type="journal article" date="2009" name="Anal. Chem.">
        <title>Lys-N and trypsin cover complementary parts of the phosphoproteome in a refined SCX-based approach.</title>
        <authorList>
            <person name="Gauci S."/>
            <person name="Helbig A.O."/>
            <person name="Slijper M."/>
            <person name="Krijgsveld J."/>
            <person name="Heck A.J."/>
            <person name="Mohammed S."/>
        </authorList>
    </citation>
    <scope>IDENTIFICATION BY MASS SPECTROMETRY [LARGE SCALE ANALYSIS]</scope>
</reference>
<reference key="30">
    <citation type="journal article" date="2009" name="Cell. Signal.">
        <title>Inhibition of dynamin prevents CCL2-mediated endocytosis of CCR2 and activation of ERK1/2.</title>
        <authorList>
            <person name="Garcia Lopez M.A."/>
            <person name="Aguado Martinez A."/>
            <person name="Lamaze C."/>
            <person name="Martinez-Alonso C."/>
            <person name="Fischer T."/>
        </authorList>
    </citation>
    <scope>FUNCTION IN INTERNALIZATION OF CCR2</scope>
</reference>
<reference key="31">
    <citation type="journal article" date="2009" name="EMBO J.">
        <title>Beta-arrestin1 phosphorylation by GRK5 regulates G protein-independent 5-HT4 receptor signalling.</title>
        <authorList>
            <person name="Barthet G."/>
            <person name="Carrat G."/>
            <person name="Cassier E."/>
            <person name="Barker B."/>
            <person name="Gaven F."/>
            <person name="Pillot M."/>
            <person name="Framery B."/>
            <person name="Pellissier L.P."/>
            <person name="Augier J."/>
            <person name="Kang D.S."/>
            <person name="Claeysen S."/>
            <person name="Reiter E."/>
            <person name="Baneres J.L."/>
            <person name="Benovic J.L."/>
            <person name="Marin P."/>
            <person name="Bockaert J."/>
            <person name="Dumuis A."/>
        </authorList>
    </citation>
    <scope>PHOSPHORYLATION AT SER-412</scope>
</reference>
<reference key="32">
    <citation type="journal article" date="2009" name="FEBS Lett.">
        <title>A scanning peptide array approach uncovers association sites within the JNK/beta arrestin signalling complex.</title>
        <authorList>
            <person name="Li X."/>
            <person name="MacLeod R."/>
            <person name="Dunlop A.J."/>
            <person name="Edwards H.V."/>
            <person name="Advant N."/>
            <person name="Gibson L.C."/>
            <person name="Devine N.M."/>
            <person name="Brown K.M."/>
            <person name="Adams D.R."/>
            <person name="Houslay M.D."/>
            <person name="Baillie G.S."/>
        </authorList>
    </citation>
    <scope>INTERACTION WITH MAP2K4/MKK4</scope>
</reference>
<reference key="33">
    <citation type="journal article" date="2009" name="J. Leukoc. Biol.">
        <title>An arrestin-dependent multi-kinase signaling complex mediates MIP-1beta/CCL4 signaling and chemotaxis of primary human macrophages.</title>
        <authorList>
            <person name="Cheung R."/>
            <person name="Malik M."/>
            <person name="Ravyn V."/>
            <person name="Tomkowicz B."/>
            <person name="Ptasznik A."/>
            <person name="Collman R.G."/>
        </authorList>
    </citation>
    <scope>FUNCTION IN MIP-1-BETA-STIMULATED CHEMOTAXIS</scope>
</reference>
<reference key="34">
    <citation type="journal article" date="2009" name="Proc. Natl. Acad. Sci. U.S.A.">
        <title>Beta-arrestin-dependent signaling and trafficking of 7-transmembrane receptors is reciprocally regulated by the deubiquitinase USP33 and the E3 ligase Mdm2.</title>
        <authorList>
            <person name="Shenoy S.K."/>
            <person name="Modi A.S."/>
            <person name="Shukla A.K."/>
            <person name="Xiao K."/>
            <person name="Berthouze M."/>
            <person name="Ahn S."/>
            <person name="Wilkinson K.D."/>
            <person name="Miller W.E."/>
            <person name="Lefkowitz R.J."/>
        </authorList>
    </citation>
    <scope>UBIQUITINATION</scope>
    <scope>DEUBIQUITINATION BY USP33</scope>
    <scope>INTERACTION WITH USP33</scope>
</reference>
<reference key="35">
    <citation type="journal article" date="2010" name="Sci. Signal.">
        <title>Quantitative phosphoproteomics reveals widespread full phosphorylation site occupancy during mitosis.</title>
        <authorList>
            <person name="Olsen J.V."/>
            <person name="Vermeulen M."/>
            <person name="Santamaria A."/>
            <person name="Kumar C."/>
            <person name="Miller M.L."/>
            <person name="Jensen L.J."/>
            <person name="Gnad F."/>
            <person name="Cox J."/>
            <person name="Jensen T.S."/>
            <person name="Nigg E.A."/>
            <person name="Brunak S."/>
            <person name="Mann M."/>
        </authorList>
    </citation>
    <scope>PHOSPHORYLATION [LARGE SCALE ANALYSIS] AT SER-412</scope>
    <scope>IDENTIFICATION BY MASS SPECTROMETRY [LARGE SCALE ANALYSIS]</scope>
    <source>
        <tissue>Cervix carcinoma</tissue>
    </source>
</reference>
<reference key="36">
    <citation type="journal article" date="2011" name="BMC Syst. Biol.">
        <title>Initial characterization of the human central proteome.</title>
        <authorList>
            <person name="Burkard T.R."/>
            <person name="Planyavsky M."/>
            <person name="Kaupe I."/>
            <person name="Breitwieser F.P."/>
            <person name="Buerckstuemmer T."/>
            <person name="Bennett K.L."/>
            <person name="Superti-Furga G."/>
            <person name="Colinge J."/>
        </authorList>
    </citation>
    <scope>IDENTIFICATION BY MASS SPECTROMETRY [LARGE SCALE ANALYSIS]</scope>
</reference>
<reference key="37">
    <citation type="journal article" date="2011" name="Sci. Signal.">
        <title>System-wide temporal characterization of the proteome and phosphoproteome of human embryonic stem cell differentiation.</title>
        <authorList>
            <person name="Rigbolt K.T."/>
            <person name="Prokhorova T.A."/>
            <person name="Akimov V."/>
            <person name="Henningsen J."/>
            <person name="Johansen P.T."/>
            <person name="Kratchmarova I."/>
            <person name="Kassem M."/>
            <person name="Mann M."/>
            <person name="Olsen J.V."/>
            <person name="Blagoev B."/>
        </authorList>
    </citation>
    <scope>PHOSPHORYLATION [LARGE SCALE ANALYSIS] AT SER-412</scope>
    <scope>IDENTIFICATION BY MASS SPECTROMETRY [LARGE SCALE ANALYSIS]</scope>
</reference>
<reference key="38">
    <citation type="journal article" date="2012" name="PLoS ONE">
        <title>Ubiquitination of CXCR7 controls receptor trafficking.</title>
        <authorList>
            <person name="Canals M."/>
            <person name="Scholten D.J."/>
            <person name="de Munnik S."/>
            <person name="Han M.K."/>
            <person name="Smit M.J."/>
            <person name="Leurs R."/>
        </authorList>
    </citation>
    <scope>FUNCTION</scope>
    <scope>INTERACTION WITH ACKR3</scope>
</reference>
<reference key="39">
    <citation type="journal article" date="2013" name="J. Biol. Chem.">
        <title>Beta-arrestin recruitment and G protein signaling by the atypical human chemokine decoy receptor CCX-CKR.</title>
        <authorList>
            <person name="Watts A.O."/>
            <person name="Verkaar F."/>
            <person name="van der Lee M.M."/>
            <person name="Timmerman C.A."/>
            <person name="Kuijer M."/>
            <person name="van Offenbeek J."/>
            <person name="van Lith L.H."/>
            <person name="Smit M.J."/>
            <person name="Leurs R."/>
            <person name="Zaman G.J."/>
            <person name="Vischer H.F."/>
        </authorList>
    </citation>
    <scope>FUNCTION</scope>
    <scope>INTERACTION WITH ACKR4</scope>
</reference>
<reference key="40">
    <citation type="journal article" date="2013" name="J. Cell Sci.">
        <title>Alpha-arrestin 1 (ARRDC1) and beta-arrestins cooperate to mediate Notch degradation in mammals.</title>
        <authorList>
            <person name="Puca L."/>
            <person name="Chastagner P."/>
            <person name="Meas-Yedid V."/>
            <person name="Israel A."/>
            <person name="Brou C."/>
        </authorList>
    </citation>
    <scope>FUNCTION</scope>
    <scope>INTERACTION WITH ARRDC1</scope>
</reference>
<reference key="41">
    <citation type="journal article" date="2013" name="J. Proteome Res.">
        <title>Toward a comprehensive characterization of a human cancer cell phosphoproteome.</title>
        <authorList>
            <person name="Zhou H."/>
            <person name="Di Palma S."/>
            <person name="Preisinger C."/>
            <person name="Peng M."/>
            <person name="Polat A.N."/>
            <person name="Heck A.J."/>
            <person name="Mohammed S."/>
        </authorList>
    </citation>
    <scope>PHOSPHORYLATION [LARGE SCALE ANALYSIS] AT SER-412</scope>
    <scope>IDENTIFICATION BY MASS SPECTROMETRY [LARGE SCALE ANALYSIS]</scope>
    <source>
        <tissue>Cervix carcinoma</tissue>
        <tissue>Erythroleukemia</tissue>
    </source>
</reference>
<reference key="42">
    <citation type="journal article" date="2013" name="Sci. Signal.">
        <title>Beta-arrestin-dependent activation of the cofilin pathway is required for the scavenging activity of the atypical chemokine receptor D6.</title>
        <authorList>
            <person name="Borroni E.M."/>
            <person name="Cancellieri C."/>
            <person name="Vacchini A."/>
            <person name="Benureau Y."/>
            <person name="Lagane B."/>
            <person name="Bachelerie F."/>
            <person name="Arenzana-Seisdedos F."/>
            <person name="Mizuno K."/>
            <person name="Mantovani A."/>
            <person name="Bonecchi R."/>
            <person name="Locati M."/>
        </authorList>
    </citation>
    <scope>FUNCTION</scope>
</reference>
<reference key="43">
    <citation type="journal article" date="2014" name="J. Proteomics">
        <title>An enzyme assisted RP-RPLC approach for in-depth analysis of human liver phosphoproteome.</title>
        <authorList>
            <person name="Bian Y."/>
            <person name="Song C."/>
            <person name="Cheng K."/>
            <person name="Dong M."/>
            <person name="Wang F."/>
            <person name="Huang J."/>
            <person name="Sun D."/>
            <person name="Wang L."/>
            <person name="Ye M."/>
            <person name="Zou H."/>
        </authorList>
    </citation>
    <scope>PHOSPHORYLATION [LARGE SCALE ANALYSIS] AT SER-412</scope>
    <scope>IDENTIFICATION BY MASS SPECTROMETRY [LARGE SCALE ANALYSIS]</scope>
    <source>
        <tissue>Liver</tissue>
    </source>
</reference>
<reference key="44">
    <citation type="journal article" date="2017" name="Sci. Rep.">
        <title>Orphan GPR61, GPR62 and GPR135 receptors and the melatonin MT2 receptor reciprocally modulate their signaling functions.</title>
        <authorList>
            <person name="Oishi A."/>
            <person name="Karamitri A."/>
            <person name="Gerbier R."/>
            <person name="Lahuna O."/>
            <person name="Ahmad R."/>
            <person name="Jockers R."/>
        </authorList>
    </citation>
    <scope>INTERACTION WITH GPR61; GPR62 AND GPR135</scope>
</reference>
<reference key="45">
    <citation type="journal article" date="2006" name="PLoS Biol.">
        <title>Role of the AP2 beta-appendage hub in recruiting partners for clathrin-coated vesicle assembly.</title>
        <authorList>
            <person name="Schmid E.M."/>
            <person name="Ford M.G.J."/>
            <person name="Burtey A."/>
            <person name="Praefcke G.J.K."/>
            <person name="Peak-Chew S.-Y."/>
            <person name="Mills I.G."/>
            <person name="Benmerah A."/>
            <person name="McMahon H.T."/>
        </authorList>
    </citation>
    <scope>X-RAY CRYSTALLOGRAPHY (2.8 ANGSTROMS) OF 383-402 IN COMPLEX WITH AP2B1</scope>
</reference>
<proteinExistence type="evidence at protein level"/>
<accession>P49407</accession>
<accession>B6V9G8</accession>
<accession>O75625</accession>
<accession>O75630</accession>
<accession>Q2PP20</accession>
<accession>Q9BTK8</accession>
<protein>
    <recommendedName>
        <fullName>Beta-arrestin-1</fullName>
    </recommendedName>
    <alternativeName>
        <fullName>Arrestin beta-1</fullName>
    </alternativeName>
    <alternativeName>
        <fullName evidence="36">Non-visual arrestin-2</fullName>
    </alternativeName>
</protein>
<evidence type="ECO:0000250" key="1"/>
<evidence type="ECO:0000250" key="2">
    <source>
        <dbReference type="UniProtKB" id="Q8BWG8"/>
    </source>
</evidence>
<evidence type="ECO:0000256" key="3">
    <source>
        <dbReference type="SAM" id="MobiDB-lite"/>
    </source>
</evidence>
<evidence type="ECO:0000269" key="4">
    <source>
    </source>
</evidence>
<evidence type="ECO:0000269" key="5">
    <source>
    </source>
</evidence>
<evidence type="ECO:0000269" key="6">
    <source>
    </source>
</evidence>
<evidence type="ECO:0000269" key="7">
    <source>
    </source>
</evidence>
<evidence type="ECO:0000269" key="8">
    <source>
    </source>
</evidence>
<evidence type="ECO:0000269" key="9">
    <source>
    </source>
</evidence>
<evidence type="ECO:0000269" key="10">
    <source>
    </source>
</evidence>
<evidence type="ECO:0000269" key="11">
    <source>
    </source>
</evidence>
<evidence type="ECO:0000269" key="12">
    <source>
    </source>
</evidence>
<evidence type="ECO:0000269" key="13">
    <source>
    </source>
</evidence>
<evidence type="ECO:0000269" key="14">
    <source>
    </source>
</evidence>
<evidence type="ECO:0000269" key="15">
    <source>
    </source>
</evidence>
<evidence type="ECO:0000269" key="16">
    <source>
    </source>
</evidence>
<evidence type="ECO:0000269" key="17">
    <source>
    </source>
</evidence>
<evidence type="ECO:0000269" key="18">
    <source>
    </source>
</evidence>
<evidence type="ECO:0000269" key="19">
    <source>
    </source>
</evidence>
<evidence type="ECO:0000269" key="20">
    <source>
    </source>
</evidence>
<evidence type="ECO:0000269" key="21">
    <source>
    </source>
</evidence>
<evidence type="ECO:0000269" key="22">
    <source>
    </source>
</evidence>
<evidence type="ECO:0000269" key="23">
    <source>
    </source>
</evidence>
<evidence type="ECO:0000269" key="24">
    <source>
    </source>
</evidence>
<evidence type="ECO:0000269" key="25">
    <source>
    </source>
</evidence>
<evidence type="ECO:0000269" key="26">
    <source>
    </source>
</evidence>
<evidence type="ECO:0000269" key="27">
    <source>
    </source>
</evidence>
<evidence type="ECO:0000269" key="28">
    <source>
    </source>
</evidence>
<evidence type="ECO:0000269" key="29">
    <source>
    </source>
</evidence>
<evidence type="ECO:0000269" key="30">
    <source>
    </source>
</evidence>
<evidence type="ECO:0000269" key="31">
    <source>
    </source>
</evidence>
<evidence type="ECO:0000269" key="32">
    <source>
    </source>
</evidence>
<evidence type="ECO:0000269" key="33">
    <source>
    </source>
</evidence>
<evidence type="ECO:0000269" key="34">
    <source>
    </source>
</evidence>
<evidence type="ECO:0000269" key="35">
    <source>
    </source>
</evidence>
<evidence type="ECO:0000303" key="36">
    <source>
    </source>
</evidence>
<evidence type="ECO:0000303" key="37">
    <source>
    </source>
</evidence>
<evidence type="ECO:0000303" key="38">
    <source ref="2"/>
</evidence>
<evidence type="ECO:0000303" key="39">
    <source ref="4"/>
</evidence>
<evidence type="ECO:0000305" key="40"/>
<evidence type="ECO:0007744" key="41">
    <source>
    </source>
</evidence>
<evidence type="ECO:0007744" key="42">
    <source>
    </source>
</evidence>
<evidence type="ECO:0007744" key="43">
    <source>
    </source>
</evidence>
<evidence type="ECO:0007744" key="44">
    <source>
    </source>
</evidence>
<evidence type="ECO:0007829" key="45">
    <source>
        <dbReference type="PDB" id="6TKO"/>
    </source>
</evidence>
<evidence type="ECO:0007829" key="46">
    <source>
        <dbReference type="PDB" id="7SRS"/>
    </source>
</evidence>
<evidence type="ECO:0007829" key="47">
    <source>
        <dbReference type="PDB" id="8AS2"/>
    </source>
</evidence>
<evidence type="ECO:0007829" key="48">
    <source>
        <dbReference type="PDB" id="8AS3"/>
    </source>
</evidence>
<evidence type="ECO:0007829" key="49">
    <source>
        <dbReference type="PDB" id="8AS4"/>
    </source>
</evidence>
<comment type="function">
    <text evidence="1 6 7 8 9 10 11 12 13 15 16 19 22 23 25 26 29 30 31 32">Functions in regulating agonist-mediated G-protein coupled receptor (GPCR) signaling by mediating both receptor desensitization and resensitization processes. During homologous desensitization, beta-arrestins bind to the GPRK-phosphorylated receptor and sterically preclude its coupling to the cognate G-protein; the binding appears to require additional receptor determinants exposed only in the active receptor conformation. The beta-arrestins target many receptors for internalization by acting as endocytic adapters (CLASPs, clathrin-associated sorting proteins) and recruiting the GPRCs to the adapter protein 2 complex 2 (AP-2) in clathrin-coated pits (CCPs). However, the extent of beta-arrestin involvement appears to vary significantly depending on the receptor, agonist and cell type. Internalized arrestin-receptor complexes traffic to intracellular endosomes, where they remain uncoupled from G-proteins. Two different modes of arrestin-mediated internalization occur. Class A receptors, like ADRB2, OPRM1, ENDRA, D1AR and ADRA1B dissociate from beta-arrestin at or near the plasma membrane and undergo rapid recycling. Class B receptors, like AVPR2, AGTR1, NTSR1, TRHR and TACR1 internalize as a complex with arrestin and traffic with it to endosomal vesicles, presumably as desensitized receptors, for extended periods of time. Receptor resensitization then requires that receptor-bound arrestin is removed so that the receptor can be dephosphorylated and returned to the plasma membrane. Involved in internalization of P2RY4 and UTP-stimulated internalization of P2RY2. Involved in phosphorylation-dependent internalization of OPRD1 ands subsequent recycling. Involved in the degradation of cAMP by recruiting cAMP phosphodiesterases to ligand-activated receptors. Beta-arrestins function as multivalent adapter proteins that can switch the GPCR from a G-protein signaling mode that transmits short-lived signals from the plasma membrane via small molecule second messengers and ion channels to a beta-arrestin signaling mode that transmits a distinct set of signals that are initiated as the receptor internalizes and transits the intracellular compartment. Acts as a signaling scaffold for MAPK pathways such as MAPK1/3 (ERK1/2). ERK1/2 activated by the beta-arrestin scaffold is largely excluded from the nucleus and confined to cytoplasmic locations such as endocytic vesicles, also called beta-arrestin signalosomes. Recruits c-Src/SRC to ADRB2 resulting in ERK activation. GPCRs for which the beta-arrestin-mediated signaling relies on both ARRB1 and ARRB2 (codependent regulation) include ADRB2, F2RL1 and PTH1R. For some GPCRs the beta-arrestin-mediated signaling relies on either ARRB1 or ARRB2 and is inhibited by the other respective beta-arrestin form (reciprocal regulation). Inhibits ERK1/2 signaling in AGTR1- and AVPR2-mediated activation (reciprocal regulation). Is required for SP-stimulated endocytosis of NK1R and recruits c-Src/SRC to internalized NK1R resulting in ERK1/2 activation, which is required for the antiapoptotic effects of SP. Is involved in proteinase-activated F2RL1-mediated ERK activity. Acts as a signaling scaffold for the AKT1 pathway. Is involved in alpha-thrombin-stimulated AKT1 signaling. Is involved in IGF1-stimulated AKT1 signaling leading to increased protection from apoptosis. Involved in activation of the p38 MAPK signaling pathway and in actin bundle formation. Involved in F2RL1-mediated cytoskeletal rearrangement and chemotaxis. Involved in AGTR1-mediated stress fiber formation by acting together with GNAQ to activate RHOA. Appears to function as signaling scaffold involved in regulation of MIP-1-beta-stimulated CCR5-dependent chemotaxis. Involved in attenuation of NF-kappa-B-dependent transcription in response to GPCR or cytokine stimulation by interacting with and stabilizing CHUK. May serve as nuclear messenger for GPCRs. Involved in OPRD1-stimulated transcriptional regulation by translocating to CDKN1B and FOS promoter regions and recruiting EP300 resulting in acetylation of histone H4. Involved in regulation of LEF1 transcriptional activity via interaction with DVL1 and/or DVL2 Also involved in regulation of receptors other than GPCRs. Involved in Toll-like receptor and IL-1 receptor signaling through the interaction with TRAF6 which prevents TRAF6 autoubiquitination and oligomerization required for activation of NF-kappa-B and JUN. Binds phosphoinositides. Binds inositolhexakisphosphate (InsP6) (By similarity). Involved in IL8-mediated granule release in neutrophils. Required for atypical chemokine receptor ACKR2-induced RAC1-LIMK1-PAK1-dependent phosphorylation of cofilin (CFL1) and for the up-regulation of ACKR2 from endosomal compartment to cell membrane, increasing its efficiency in chemokine uptake and degradation. Involved in the internalization of the atypical chemokine receptor ACKR3. Negatively regulates the NOTCH signaling pathway by mediating the ubiquitination and degradation of NOTCH1 by ITCH. Participates in the recruitment of the ubiquitin-protein ligase to the receptor (PubMed:23886940).</text>
</comment>
<comment type="subunit">
    <text evidence="1 5 6 11 12 14 15 17 18 19 20 21 24 28 29 30 32 33 34 35">Monomer. Homodimer. Homooligomer; the self-association is mediated by InsP6-binding. Heterooligomer with ARRB2; the association is mediated by InsP6-binding. Interacts with GPR143. Interacts with ADRB2 (phosphorylated). Interacts with CHRM2 (phosphorylated). Interacts with LHCGR. Interacts with CYTH2 and CASR. Interacts with AP2B1 (dephosphorylated at 'Tyr-737'); phosphorylation of AP2B1 at 'Tyr-737' disrupts the interaction. Interacts (dephosphorylated at Ser-412) with CLTC. Interacts with CCR2 and GRK2. Interacts with CRR5. Interacts with PTAFR (phosphorylated on serine residues). Interacts with CLTC and MAP2K3. Interacts with CREB1. Interacts with TRAF6. Interacts with IGF1R and MDM2. Interacts with C5AR1. Interacts with PDE4D. Interacts with SRC (via the SH3 domain and the protein kinase domain); the interaction is independent of the phosphorylation state of SRC C-terminus. Interacts with TACR1. Interacts with RAF1. Interacts with CHUK, IKBKB and MAP3K14. Interacts with DVL1; the interaction is enhanced by phosphorylation of DVL1. Interacts with DVL2; the interaction is enhanced by phosphorylation of DVL2. Interacts with IGF1R. Associates with MAP kinase p38. Part of a MAPK signaling complex consisting of TACR1, ARRB1, SRC, MAPK1 (activated) and MAPK3 (activated). Part of a MAPK signaling complex consisting of F2RL1, ARRB1, RAF1, MAPK1 (activated) and MAPK3 (activated) (By similarity). Interacts with MAP2K4/MKK4. Interacts with HCK and CXCR1 (phosphorylated). Interacts with ACKR3 and ACKR4. Interacts with ARRDC1; the interaction is direct (PubMed:23886940). Interacts with GPR61, GPR62 and GPR135 (PubMed:28827538).</text>
</comment>
<comment type="interaction">
    <interactant intactId="EBI-743313">
        <id>P49407</id>
    </interactant>
    <interactant intactId="EBI-11529439">
        <id>P63010-2</id>
        <label>AP2B1</label>
    </interactant>
    <organismsDiffer>false</organismsDiffer>
    <experiments>3</experiments>
</comment>
<comment type="interaction">
    <interactant intactId="EBI-743313">
        <id>P49407</id>
    </interactant>
    <interactant intactId="EBI-710484">
        <id>O15169</id>
        <label>AXIN1</label>
    </interactant>
    <organismsDiffer>false</organismsDiffer>
    <experiments>2</experiments>
</comment>
<comment type="interaction">
    <interactant intactId="EBI-743313">
        <id>P49407</id>
    </interactant>
    <interactant intactId="EBI-397435">
        <id>P62158</id>
        <label>CALM3</label>
    </interactant>
    <organismsDiffer>false</organismsDiffer>
    <experiments>3</experiments>
</comment>
<comment type="interaction">
    <interactant intactId="EBI-743313">
        <id>P49407</id>
    </interactant>
    <interactant intactId="EBI-1165705">
        <id>P20963</id>
        <label>CD247</label>
    </interactant>
    <organismsDiffer>false</organismsDiffer>
    <experiments>9</experiments>
</comment>
<comment type="interaction">
    <interactant intactId="EBI-743313">
        <id>P49407</id>
    </interactant>
    <interactant intactId="EBI-6624559">
        <id>P25101</id>
        <label>EDNRA</label>
    </interactant>
    <organismsDiffer>false</organismsDiffer>
    <experiments>3</experiments>
</comment>
<comment type="interaction">
    <interactant intactId="EBI-743313">
        <id>P49407</id>
    </interactant>
    <interactant intactId="EBI-3909604">
        <id>P50148</id>
        <label>GNAQ</label>
    </interactant>
    <organismsDiffer>false</organismsDiffer>
    <experiments>2</experiments>
</comment>
<comment type="interaction">
    <interactant intactId="EBI-743313">
        <id>P49407</id>
    </interactant>
    <interactant intactId="EBI-4400880">
        <id>Q5JWF2</id>
        <label>GNAS</label>
    </interactant>
    <organismsDiffer>false</organismsDiffer>
    <experiments>5</experiments>
</comment>
<comment type="interaction">
    <interactant intactId="EBI-743313">
        <id>P49407</id>
    </interactant>
    <interactant intactId="EBI-744239">
        <id>Q14749</id>
        <label>GNMT</label>
    </interactant>
    <organismsDiffer>false</organismsDiffer>
    <experiments>12</experiments>
</comment>
<comment type="interaction">
    <interactant intactId="EBI-743313">
        <id>P49407</id>
    </interactant>
    <interactant intactId="EBI-351506">
        <id>P06396</id>
        <label>GSN</label>
    </interactant>
    <organismsDiffer>false</organismsDiffer>
    <experiments>3</experiments>
</comment>
<comment type="interaction">
    <interactant intactId="EBI-743313">
        <id>P49407</id>
    </interactant>
    <interactant intactId="EBI-447269">
        <id>Q16665</id>
        <label>HIF1A</label>
    </interactant>
    <organismsDiffer>false</organismsDiffer>
    <experiments>3</experiments>
</comment>
<comment type="interaction">
    <interactant intactId="EBI-743313">
        <id>P49407</id>
    </interactant>
    <interactant intactId="EBI-351896">
        <id>P11142</id>
        <label>HSPA8</label>
    </interactant>
    <organismsDiffer>false</organismsDiffer>
    <experiments>4</experiments>
</comment>
<comment type="interaction">
    <interactant intactId="EBI-743313">
        <id>P49407</id>
    </interactant>
    <interactant intactId="EBI-476263">
        <id>Q99683</id>
        <label>MAP3K5</label>
    </interactant>
    <organismsDiffer>false</organismsDiffer>
    <experiments>3</experiments>
</comment>
<comment type="interaction">
    <interactant intactId="EBI-743313">
        <id>P49407</id>
    </interactant>
    <interactant intactId="EBI-713543">
        <id>P53779</id>
        <label>MAPK10</label>
    </interactant>
    <organismsDiffer>false</organismsDiffer>
    <experiments>2</experiments>
</comment>
<comment type="interaction">
    <interactant intactId="EBI-743313">
        <id>P49407</id>
    </interactant>
    <interactant intactId="EBI-713568">
        <id>P45984</id>
        <label>MAPK9</label>
    </interactant>
    <organismsDiffer>false</organismsDiffer>
    <experiments>9</experiments>
</comment>
<comment type="interaction">
    <interactant intactId="EBI-743313">
        <id>P49407</id>
    </interactant>
    <interactant intactId="EBI-389668">
        <id>Q00987</id>
        <label>MDM2</label>
    </interactant>
    <organismsDiffer>false</organismsDiffer>
    <experiments>3</experiments>
</comment>
<comment type="interaction">
    <interactant intactId="EBI-743313">
        <id>P49407</id>
    </interactant>
    <interactant intactId="EBI-346967">
        <id>P19338</id>
        <label>NCL</label>
    </interactant>
    <organismsDiffer>false</organismsDiffer>
    <experiments>3</experiments>
</comment>
<comment type="interaction">
    <interactant intactId="EBI-743313">
        <id>P49407</id>
    </interactant>
    <interactant intactId="EBI-396155">
        <id>Q14978</id>
        <label>NOLC1</label>
    </interactant>
    <organismsDiffer>false</organismsDiffer>
    <experiments>5</experiments>
</comment>
<comment type="interaction">
    <interactant intactId="EBI-743313">
        <id>P49407</id>
    </interactant>
    <interactant intactId="EBI-353408">
        <id>P14618</id>
        <label>PKM</label>
    </interactant>
    <organismsDiffer>false</organismsDiffer>
    <experiments>3</experiments>
</comment>
<comment type="interaction">
    <interactant intactId="EBI-743313">
        <id>P49407</id>
    </interactant>
    <interactant intactId="EBI-11526590">
        <id>P14859-6</id>
        <label>POU2F1</label>
    </interactant>
    <organismsDiffer>false</organismsDiffer>
    <experiments>3</experiments>
</comment>
<comment type="interaction">
    <interactant intactId="EBI-743313">
        <id>P49407</id>
    </interactant>
    <interactant intactId="EBI-989143">
        <id>P35813</id>
        <label>PPM1A</label>
    </interactant>
    <organismsDiffer>false</organismsDiffer>
    <experiments>4</experiments>
</comment>
<comment type="interaction">
    <interactant intactId="EBI-743313">
        <id>P49407</id>
    </interactant>
    <interactant intactId="EBI-1047039">
        <id>O75688</id>
        <label>PPM1B</label>
    </interactant>
    <organismsDiffer>false</organismsDiffer>
    <experiments>4</experiments>
</comment>
<comment type="interaction">
    <interactant intactId="EBI-743313">
        <id>P49407</id>
    </interactant>
    <interactant intactId="EBI-395940">
        <id>Q13523</id>
        <label>PRP4K</label>
    </interactant>
    <organismsDiffer>false</organismsDiffer>
    <experiments>2</experiments>
</comment>
<comment type="interaction">
    <interactant intactId="EBI-743313">
        <id>P49407</id>
    </interactant>
    <interactant intactId="EBI-1055001">
        <id>P06702</id>
        <label>S100A9</label>
    </interactant>
    <organismsDiffer>false</organismsDiffer>
    <experiments>2</experiments>
</comment>
<comment type="interaction">
    <interactant intactId="EBI-743313">
        <id>P49407</id>
    </interactant>
    <interactant intactId="EBI-621482">
        <id>P12931</id>
        <label>SRC</label>
    </interactant>
    <organismsDiffer>false</organismsDiffer>
    <experiments>3</experiments>
</comment>
<comment type="interaction">
    <interactant intactId="EBI-743313">
        <id>P49407</id>
    </interactant>
    <interactant intactId="EBI-458376">
        <id>Q15208</id>
        <label>STK38</label>
    </interactant>
    <organismsDiffer>false</organismsDiffer>
    <experiments>3</experiments>
</comment>
<comment type="interaction">
    <interactant intactId="EBI-743313">
        <id>P49407</id>
    </interactant>
    <interactant intactId="EBI-396105">
        <id>Q13428</id>
        <label>TCOF1</label>
    </interactant>
    <organismsDiffer>false</organismsDiffer>
    <experiments>3</experiments>
</comment>
<comment type="interaction">
    <interactant intactId="EBI-743313">
        <id>P49407</id>
    </interactant>
    <interactant intactId="EBI-366083">
        <id>P04637</id>
        <label>TP53</label>
    </interactant>
    <organismsDiffer>false</organismsDiffer>
    <experiments>5</experiments>
</comment>
<comment type="interaction">
    <interactant intactId="EBI-743313">
        <id>P49407</id>
    </interactant>
    <interactant intactId="EBI-359854">
        <id>P27348</id>
        <label>YWHAQ</label>
    </interactant>
    <organismsDiffer>false</organismsDiffer>
    <experiments>3</experiments>
</comment>
<comment type="interaction">
    <interactant intactId="EBI-743313">
        <id>P49407</id>
    </interactant>
    <interactant intactId="EBI-765538">
        <id>P25490</id>
        <label>YY1</label>
    </interactant>
    <organismsDiffer>false</organismsDiffer>
    <experiments>4</experiments>
</comment>
<comment type="interaction">
    <interactant intactId="EBI-743313">
        <id>P49407</id>
    </interactant>
    <interactant intactId="EBI-740718">
        <id>O43298</id>
        <label>ZBTB43</label>
    </interactant>
    <organismsDiffer>false</organismsDiffer>
    <experiments>5</experiments>
</comment>
<comment type="interaction">
    <interactant intactId="EBI-743313">
        <id>P49407</id>
    </interactant>
    <interactant intactId="EBI-1051583">
        <id>O95218</id>
        <label>ZRANB2</label>
    </interactant>
    <organismsDiffer>false</organismsDiffer>
    <experiments>4</experiments>
</comment>
<comment type="interaction">
    <interactant intactId="EBI-743313">
        <id>P49407</id>
    </interactant>
    <interactant intactId="EBI-6480811">
        <id>Q7DB77</id>
        <label>tir</label>
    </interactant>
    <organismsDiffer>true</organismsDiffer>
    <experiments>3</experiments>
</comment>
<comment type="subcellular location">
    <subcellularLocation>
        <location>Cytoplasm</location>
    </subcellularLocation>
    <subcellularLocation>
        <location>Nucleus</location>
    </subcellularLocation>
    <subcellularLocation>
        <location>Cell membrane</location>
    </subcellularLocation>
    <subcellularLocation>
        <location evidence="40">Membrane</location>
        <location evidence="40">Clathrin-coated pit</location>
    </subcellularLocation>
    <subcellularLocation>
        <location evidence="1">Cell projection</location>
        <location evidence="1">Pseudopodium</location>
    </subcellularLocation>
    <subcellularLocation>
        <location>Cytoplasmic vesicle</location>
    </subcellularLocation>
    <text evidence="1">Translocates to the plasma membrane and colocalizes with antagonist-stimulated GPCRs. The monomeric form is predominantly located in the nucleus. The oligomeric form is located in the cytoplasm. Translocates to the nucleus upon stimulation of OPRD1 (By similarity).</text>
</comment>
<comment type="alternative products">
    <event type="alternative splicing"/>
    <isoform>
        <id>P49407-1</id>
        <name>1A</name>
        <sequence type="displayed"/>
    </isoform>
    <isoform>
        <id>P49407-2</id>
        <name>1B</name>
        <sequence type="described" ref="VSP_000322"/>
    </isoform>
</comment>
<comment type="domain">
    <text evidence="1">The [DE]-X(1,2)-F-X-X-[FL]-X-X-X-R motif mediates interaction the AP-2 complex subunit AP2B1 (By similarity). Binding to phosphorylated GPCRs induces a conformationanl change that exposes the motif to the surface.</text>
</comment>
<comment type="domain">
    <text evidence="1">The N-terminus binds InsP6 with low affinity.</text>
</comment>
<comment type="domain">
    <text evidence="1">The C-terminus binds InsP6 with high affinity.</text>
</comment>
<comment type="PTM">
    <text evidence="27">Constitutively phosphorylated at Ser-412 in the cytoplasm. At the plasma membrane, is rapidly dephosphorylated, a process that is required for clathrin binding and ADRB2 endocytosis but not for ADRB2 binding and desensitization. Once internalized, is rephosphorylated.</text>
</comment>
<comment type="PTM">
    <text evidence="24">The ubiquitination status appears to regulate the formation and trafficking of beta-arrestin-GPCR complexes and signaling. Ubiquitination appears to occur GPCR-specific. Ubiquitinated by MDM2; the ubiquitination is required for rapid internalization of ADRB2. Deubiquitinated by USP33; the deubiquitination leads to a dissociation of the beta-arrestin-GPCR complex. Stimulation of a class A GPCR, such as ADRB2, induces transient ubiquitination and subsequently promotes association with USP33.</text>
</comment>
<comment type="similarity">
    <text evidence="40">Belongs to the arrestin family.</text>
</comment>
<comment type="online information" name="Wikipedia">
    <link uri="https://en.wikipedia.org/wiki/Arrestin"/>
    <text>Arrestin entry</text>
</comment>
<organism>
    <name type="scientific">Homo sapiens</name>
    <name type="common">Human</name>
    <dbReference type="NCBI Taxonomy" id="9606"/>
    <lineage>
        <taxon>Eukaryota</taxon>
        <taxon>Metazoa</taxon>
        <taxon>Chordata</taxon>
        <taxon>Craniata</taxon>
        <taxon>Vertebrata</taxon>
        <taxon>Euteleostomi</taxon>
        <taxon>Mammalia</taxon>
        <taxon>Eutheria</taxon>
        <taxon>Euarchontoglires</taxon>
        <taxon>Primates</taxon>
        <taxon>Haplorrhini</taxon>
        <taxon>Catarrhini</taxon>
        <taxon>Hominidae</taxon>
        <taxon>Homo</taxon>
    </lineage>
</organism>
<keyword id="KW-0002">3D-structure</keyword>
<keyword id="KW-0025">Alternative splicing</keyword>
<keyword id="KW-1003">Cell membrane</keyword>
<keyword id="KW-0966">Cell projection</keyword>
<keyword id="KW-0168">Coated pit</keyword>
<keyword id="KW-0963">Cytoplasm</keyword>
<keyword id="KW-0968">Cytoplasmic vesicle</keyword>
<keyword id="KW-0472">Membrane</keyword>
<keyword id="KW-0539">Nucleus</keyword>
<keyword id="KW-0597">Phosphoprotein</keyword>
<keyword id="KW-0653">Protein transport</keyword>
<keyword id="KW-1267">Proteomics identification</keyword>
<keyword id="KW-1185">Reference proteome</keyword>
<keyword id="KW-0734">Signal transduction inhibitor</keyword>
<keyword id="KW-0804">Transcription</keyword>
<keyword id="KW-0805">Transcription regulation</keyword>
<keyword id="KW-0813">Transport</keyword>
<keyword id="KW-0832">Ubl conjugation</keyword>
<name>ARRB1_HUMAN</name>
<dbReference type="EMBL" id="L04685">
    <property type="protein sequence ID" value="AAA35559.1"/>
    <property type="molecule type" value="mRNA"/>
</dbReference>
<dbReference type="EMBL" id="L04685">
    <property type="protein sequence ID" value="AAA35558.1"/>
    <property type="molecule type" value="mRNA"/>
</dbReference>
<dbReference type="EMBL" id="AF084040">
    <property type="protein sequence ID" value="AAC33295.1"/>
    <property type="molecule type" value="mRNA"/>
</dbReference>
<dbReference type="EMBL" id="AF084940">
    <property type="protein sequence ID" value="AAC34123.1"/>
    <property type="molecule type" value="mRNA"/>
</dbReference>
<dbReference type="EMBL" id="DQ314865">
    <property type="protein sequence ID" value="ABC40724.1"/>
    <property type="molecule type" value="Genomic_DNA"/>
</dbReference>
<dbReference type="EMBL" id="FJ348262">
    <property type="protein sequence ID" value="ACI96306.1"/>
    <property type="molecule type" value="mRNA"/>
</dbReference>
<dbReference type="EMBL" id="CH471076">
    <property type="protein sequence ID" value="EAW74962.1"/>
    <property type="molecule type" value="Genomic_DNA"/>
</dbReference>
<dbReference type="EMBL" id="BC003636">
    <property type="protein sequence ID" value="AAH03636.1"/>
    <property type="molecule type" value="mRNA"/>
</dbReference>
<dbReference type="CCDS" id="CCDS31640.1">
    <molecule id="P49407-2"/>
</dbReference>
<dbReference type="CCDS" id="CCDS44684.1">
    <molecule id="P49407-1"/>
</dbReference>
<dbReference type="PIR" id="B46682">
    <property type="entry name" value="B46682"/>
</dbReference>
<dbReference type="RefSeq" id="NP_004032.2">
    <molecule id="P49407-1"/>
    <property type="nucleotide sequence ID" value="NM_004041.4"/>
</dbReference>
<dbReference type="RefSeq" id="NP_064647.1">
    <molecule id="P49407-2"/>
    <property type="nucleotide sequence ID" value="NM_020251.4"/>
</dbReference>
<dbReference type="PDB" id="2IV8">
    <property type="method" value="X-ray"/>
    <property type="resolution" value="2.80 A"/>
    <property type="chains" value="P/Q=383-402"/>
</dbReference>
<dbReference type="PDB" id="6PWC">
    <property type="method" value="EM"/>
    <property type="resolution" value="4.90 A"/>
    <property type="chains" value="A=1-393"/>
</dbReference>
<dbReference type="PDB" id="6TKO">
    <property type="method" value="EM"/>
    <property type="resolution" value="3.30 A"/>
    <property type="chains" value="B=1-418"/>
</dbReference>
<dbReference type="PDB" id="6UP7">
    <property type="method" value="EM"/>
    <property type="resolution" value="4.20 A"/>
    <property type="chains" value="B=8-355"/>
</dbReference>
<dbReference type="PDB" id="7R0C">
    <property type="method" value="EM"/>
    <property type="resolution" value="4.73 A"/>
    <property type="chains" value="C=2-382"/>
</dbReference>
<dbReference type="PDB" id="7R0J">
    <property type="method" value="EM"/>
    <property type="resolution" value="4.23 A"/>
    <property type="chains" value="C=2-382"/>
</dbReference>
<dbReference type="PDB" id="7SRS">
    <property type="method" value="EM"/>
    <property type="resolution" value="3.30 A"/>
    <property type="chains" value="C=2-376"/>
</dbReference>
<dbReference type="PDB" id="8AS2">
    <property type="method" value="X-ray"/>
    <property type="resolution" value="3.20 A"/>
    <property type="chains" value="A=1-359"/>
</dbReference>
<dbReference type="PDB" id="8AS3">
    <property type="method" value="X-ray"/>
    <property type="resolution" value="3.50 A"/>
    <property type="chains" value="A=1-359"/>
</dbReference>
<dbReference type="PDB" id="8AS4">
    <property type="method" value="X-ray"/>
    <property type="resolution" value="2.30 A"/>
    <property type="chains" value="A/B=1-418"/>
</dbReference>
<dbReference type="PDB" id="8JRV">
    <property type="method" value="EM"/>
    <property type="resolution" value="3.30 A"/>
    <property type="chains" value="A/H/L=1-379"/>
</dbReference>
<dbReference type="PDB" id="8WRZ">
    <property type="method" value="EM"/>
    <property type="resolution" value="3.60 A"/>
    <property type="chains" value="A=1-393"/>
</dbReference>
<dbReference type="PDB" id="9II2">
    <property type="method" value="EM"/>
    <property type="resolution" value="3.70 A"/>
    <property type="chains" value="A/C=1-418"/>
</dbReference>
<dbReference type="PDB" id="9II3">
    <property type="method" value="EM"/>
    <property type="resolution" value="3.90 A"/>
    <property type="chains" value="A=1-418"/>
</dbReference>
<dbReference type="PDBsum" id="2IV8"/>
<dbReference type="PDBsum" id="6PWC"/>
<dbReference type="PDBsum" id="6TKO"/>
<dbReference type="PDBsum" id="6UP7"/>
<dbReference type="PDBsum" id="7R0C"/>
<dbReference type="PDBsum" id="7R0J"/>
<dbReference type="PDBsum" id="7SRS"/>
<dbReference type="PDBsum" id="8AS2"/>
<dbReference type="PDBsum" id="8AS3"/>
<dbReference type="PDBsum" id="8AS4"/>
<dbReference type="PDBsum" id="8JRV"/>
<dbReference type="PDBsum" id="8WRZ"/>
<dbReference type="PDBsum" id="9II2"/>
<dbReference type="PDBsum" id="9II3"/>
<dbReference type="EMDB" id="EMD-10515"/>
<dbReference type="EMDB" id="EMD-14221"/>
<dbReference type="EMDB" id="EMD-14223"/>
<dbReference type="EMDB" id="EMD-20505"/>
<dbReference type="EMDB" id="EMD-20836"/>
<dbReference type="EMDB" id="EMD-25403"/>
<dbReference type="EMDB" id="EMD-37795"/>
<dbReference type="EMDB" id="EMD-60588"/>
<dbReference type="EMDB" id="EMD-60589"/>
<dbReference type="SMR" id="P49407"/>
<dbReference type="BioGRID" id="106901">
    <property type="interactions" value="303"/>
</dbReference>
<dbReference type="CORUM" id="P49407"/>
<dbReference type="DIP" id="DIP-29979N"/>
<dbReference type="ELM" id="P49407"/>
<dbReference type="FunCoup" id="P49407">
    <property type="interactions" value="2738"/>
</dbReference>
<dbReference type="IntAct" id="P49407">
    <property type="interactions" value="243"/>
</dbReference>
<dbReference type="MINT" id="P49407"/>
<dbReference type="STRING" id="9606.ENSP00000409581"/>
<dbReference type="BindingDB" id="P49407"/>
<dbReference type="ChEMBL" id="CHEMBL1795088"/>
<dbReference type="MoonDB" id="P49407">
    <property type="type" value="Curated"/>
</dbReference>
<dbReference type="MoonProt" id="P49407"/>
<dbReference type="TCDB" id="8.A.136.1.1">
    <property type="family name" value="the alpha/beta-arrestin (arrb) family"/>
</dbReference>
<dbReference type="GlyGen" id="P49407">
    <property type="glycosylation" value="2 sites, 1 O-linked glycan (1 site)"/>
</dbReference>
<dbReference type="iPTMnet" id="P49407"/>
<dbReference type="PhosphoSitePlus" id="P49407"/>
<dbReference type="SwissPalm" id="P49407"/>
<dbReference type="BioMuta" id="ARRB1"/>
<dbReference type="DMDM" id="20141238"/>
<dbReference type="OGP" id="P49407"/>
<dbReference type="jPOST" id="P49407"/>
<dbReference type="MassIVE" id="P49407"/>
<dbReference type="PaxDb" id="9606-ENSP00000409581"/>
<dbReference type="PeptideAtlas" id="P49407"/>
<dbReference type="ProteomicsDB" id="56001">
    <molecule id="P49407-1"/>
</dbReference>
<dbReference type="ProteomicsDB" id="56002">
    <molecule id="P49407-2"/>
</dbReference>
<dbReference type="Pumba" id="P49407"/>
<dbReference type="Antibodypedia" id="3527">
    <property type="antibodies" value="731 antibodies from 45 providers"/>
</dbReference>
<dbReference type="DNASU" id="408"/>
<dbReference type="Ensembl" id="ENST00000360025.7">
    <molecule id="P49407-2"/>
    <property type="protein sequence ID" value="ENSP00000353124.3"/>
    <property type="gene ID" value="ENSG00000137486.17"/>
</dbReference>
<dbReference type="Ensembl" id="ENST00000420843.7">
    <molecule id="P49407-1"/>
    <property type="protein sequence ID" value="ENSP00000409581.2"/>
    <property type="gene ID" value="ENSG00000137486.17"/>
</dbReference>
<dbReference type="GeneID" id="408"/>
<dbReference type="KEGG" id="hsa:408"/>
<dbReference type="MANE-Select" id="ENST00000420843.7">
    <property type="protein sequence ID" value="ENSP00000409581.2"/>
    <property type="RefSeq nucleotide sequence ID" value="NM_004041.5"/>
    <property type="RefSeq protein sequence ID" value="NP_004032.2"/>
</dbReference>
<dbReference type="UCSC" id="uc001owe.3">
    <molecule id="P49407-1"/>
    <property type="organism name" value="human"/>
</dbReference>
<dbReference type="AGR" id="HGNC:711"/>
<dbReference type="CTD" id="408"/>
<dbReference type="DisGeNET" id="408"/>
<dbReference type="GeneCards" id="ARRB1"/>
<dbReference type="HGNC" id="HGNC:711">
    <property type="gene designation" value="ARRB1"/>
</dbReference>
<dbReference type="HPA" id="ENSG00000137486">
    <property type="expression patterns" value="Low tissue specificity"/>
</dbReference>
<dbReference type="MIM" id="107940">
    <property type="type" value="gene"/>
</dbReference>
<dbReference type="neXtProt" id="NX_P49407"/>
<dbReference type="OpenTargets" id="ENSG00000137486"/>
<dbReference type="PharmGKB" id="PA59"/>
<dbReference type="VEuPathDB" id="HostDB:ENSG00000137486"/>
<dbReference type="eggNOG" id="KOG3865">
    <property type="taxonomic scope" value="Eukaryota"/>
</dbReference>
<dbReference type="GeneTree" id="ENSGT00950000182887"/>
<dbReference type="HOGENOM" id="CLU_033484_1_1_1"/>
<dbReference type="InParanoid" id="P49407"/>
<dbReference type="OMA" id="MQLERPM"/>
<dbReference type="OrthoDB" id="298939at2759"/>
<dbReference type="PAN-GO" id="P49407">
    <property type="GO annotations" value="9 GO annotations based on evolutionary models"/>
</dbReference>
<dbReference type="PhylomeDB" id="P49407"/>
<dbReference type="TreeFam" id="TF314260"/>
<dbReference type="PathwayCommons" id="P49407"/>
<dbReference type="Reactome" id="R-HSA-2122948">
    <property type="pathway name" value="Activated NOTCH1 Transmits Signal to the Nucleus"/>
</dbReference>
<dbReference type="Reactome" id="R-HSA-418555">
    <property type="pathway name" value="G alpha (s) signalling events"/>
</dbReference>
<dbReference type="Reactome" id="R-HSA-432720">
    <property type="pathway name" value="Lysosome Vesicle Biogenesis"/>
</dbReference>
<dbReference type="Reactome" id="R-HSA-432722">
    <property type="pathway name" value="Golgi Associated Vesicle Biogenesis"/>
</dbReference>
<dbReference type="Reactome" id="R-HSA-456926">
    <property type="pathway name" value="Thrombin signalling through proteinase activated receptors (PARs)"/>
</dbReference>
<dbReference type="Reactome" id="R-HSA-5635838">
    <property type="pathway name" value="Activation of SMO"/>
</dbReference>
<dbReference type="Reactome" id="R-HSA-5674135">
    <property type="pathway name" value="MAP2K and MAPK activation"/>
</dbReference>
<dbReference type="Reactome" id="R-HSA-5689880">
    <property type="pathway name" value="Ub-specific processing proteases"/>
</dbReference>
<dbReference type="Reactome" id="R-HSA-6802946">
    <property type="pathway name" value="Signaling by moderate kinase activity BRAF mutants"/>
</dbReference>
<dbReference type="Reactome" id="R-HSA-6802948">
    <property type="pathway name" value="Signaling by high-kinase activity BRAF mutants"/>
</dbReference>
<dbReference type="Reactome" id="R-HSA-6802952">
    <property type="pathway name" value="Signaling by BRAF and RAF1 fusions"/>
</dbReference>
<dbReference type="Reactome" id="R-HSA-6802955">
    <property type="pathway name" value="Paradoxical activation of RAF signaling by kinase inactive BRAF"/>
</dbReference>
<dbReference type="Reactome" id="R-HSA-8856825">
    <property type="pathway name" value="Cargo recognition for clathrin-mediated endocytosis"/>
</dbReference>
<dbReference type="Reactome" id="R-HSA-8856828">
    <property type="pathway name" value="Clathrin-mediated endocytosis"/>
</dbReference>
<dbReference type="Reactome" id="R-HSA-9649948">
    <property type="pathway name" value="Signaling downstream of RAS mutants"/>
</dbReference>
<dbReference type="Reactome" id="R-HSA-9656223">
    <property type="pathway name" value="Signaling by RAF1 mutants"/>
</dbReference>
<dbReference type="Reactome" id="R-HSA-9839389">
    <property type="pathway name" value="TGFBR3 regulates TGF-beta signaling"/>
</dbReference>
<dbReference type="SignaLink" id="P49407"/>
<dbReference type="SIGNOR" id="P49407"/>
<dbReference type="BioGRID-ORCS" id="408">
    <property type="hits" value="198 hits in 1160 CRISPR screens"/>
</dbReference>
<dbReference type="CD-CODE" id="FB4E32DD">
    <property type="entry name" value="Presynaptic clusters and postsynaptic densities"/>
</dbReference>
<dbReference type="ChiTaRS" id="ARRB1">
    <property type="organism name" value="human"/>
</dbReference>
<dbReference type="EvolutionaryTrace" id="P49407"/>
<dbReference type="GeneWiki" id="Arrestin_beta_1"/>
<dbReference type="GenomeRNAi" id="408"/>
<dbReference type="Pharos" id="P49407">
    <property type="development level" value="Tbio"/>
</dbReference>
<dbReference type="PRO" id="PR:P49407"/>
<dbReference type="Proteomes" id="UP000005640">
    <property type="component" value="Chromosome 11"/>
</dbReference>
<dbReference type="RNAct" id="P49407">
    <property type="molecule type" value="protein"/>
</dbReference>
<dbReference type="Bgee" id="ENSG00000137486">
    <property type="expression patterns" value="Expressed in monocyte and 168 other cell types or tissues"/>
</dbReference>
<dbReference type="ExpressionAtlas" id="P49407">
    <property type="expression patterns" value="baseline and differential"/>
</dbReference>
<dbReference type="GO" id="GO:0000785">
    <property type="term" value="C:chromatin"/>
    <property type="evidence" value="ECO:0000314"/>
    <property type="project" value="BHF-UCL"/>
</dbReference>
<dbReference type="GO" id="GO:0005905">
    <property type="term" value="C:clathrin-coated pit"/>
    <property type="evidence" value="ECO:0007669"/>
    <property type="project" value="UniProtKB-SubCell"/>
</dbReference>
<dbReference type="GO" id="GO:0005737">
    <property type="term" value="C:cytoplasm"/>
    <property type="evidence" value="ECO:0000314"/>
    <property type="project" value="UniProtKB"/>
</dbReference>
<dbReference type="GO" id="GO:0031410">
    <property type="term" value="C:cytoplasmic vesicle"/>
    <property type="evidence" value="ECO:0000314"/>
    <property type="project" value="UniProtKB"/>
</dbReference>
<dbReference type="GO" id="GO:0030659">
    <property type="term" value="C:cytoplasmic vesicle membrane"/>
    <property type="evidence" value="ECO:0000304"/>
    <property type="project" value="Reactome"/>
</dbReference>
<dbReference type="GO" id="GO:0005829">
    <property type="term" value="C:cytosol"/>
    <property type="evidence" value="ECO:0000318"/>
    <property type="project" value="GO_Central"/>
</dbReference>
<dbReference type="GO" id="GO:0030666">
    <property type="term" value="C:endocytic vesicle membrane"/>
    <property type="evidence" value="ECO:0000304"/>
    <property type="project" value="Reactome"/>
</dbReference>
<dbReference type="GO" id="GO:0000139">
    <property type="term" value="C:Golgi membrane"/>
    <property type="evidence" value="ECO:0000304"/>
    <property type="project" value="Reactome"/>
</dbReference>
<dbReference type="GO" id="GO:0005765">
    <property type="term" value="C:lysosomal membrane"/>
    <property type="evidence" value="ECO:0000304"/>
    <property type="project" value="Reactome"/>
</dbReference>
<dbReference type="GO" id="GO:0016604">
    <property type="term" value="C:nuclear body"/>
    <property type="evidence" value="ECO:0000314"/>
    <property type="project" value="HPA"/>
</dbReference>
<dbReference type="GO" id="GO:0005654">
    <property type="term" value="C:nucleoplasm"/>
    <property type="evidence" value="ECO:0000314"/>
    <property type="project" value="HPA"/>
</dbReference>
<dbReference type="GO" id="GO:0005634">
    <property type="term" value="C:nucleus"/>
    <property type="evidence" value="ECO:0000314"/>
    <property type="project" value="UniProtKB"/>
</dbReference>
<dbReference type="GO" id="GO:0005886">
    <property type="term" value="C:plasma membrane"/>
    <property type="evidence" value="ECO:0000318"/>
    <property type="project" value="GO_Central"/>
</dbReference>
<dbReference type="GO" id="GO:0031143">
    <property type="term" value="C:pseudopodium"/>
    <property type="evidence" value="ECO:0007669"/>
    <property type="project" value="UniProtKB-SubCell"/>
</dbReference>
<dbReference type="GO" id="GO:0031701">
    <property type="term" value="F:angiotensin receptor binding"/>
    <property type="evidence" value="ECO:0000353"/>
    <property type="project" value="UniProtKB"/>
</dbReference>
<dbReference type="GO" id="GO:1990763">
    <property type="term" value="F:arrestin family protein binding"/>
    <property type="evidence" value="ECO:0000353"/>
    <property type="project" value="UniProtKB"/>
</dbReference>
<dbReference type="GO" id="GO:0004857">
    <property type="term" value="F:enzyme inhibitor activity"/>
    <property type="evidence" value="ECO:0000304"/>
    <property type="project" value="ProtInc"/>
</dbReference>
<dbReference type="GO" id="GO:0001664">
    <property type="term" value="F:G protein-coupled receptor binding"/>
    <property type="evidence" value="ECO:0000318"/>
    <property type="project" value="GO_Central"/>
</dbReference>
<dbReference type="GO" id="GO:0005096">
    <property type="term" value="F:GTPase activator activity"/>
    <property type="evidence" value="ECO:0000315"/>
    <property type="project" value="UniProtKB"/>
</dbReference>
<dbReference type="GO" id="GO:0005159">
    <property type="term" value="F:insulin-like growth factor receptor binding"/>
    <property type="evidence" value="ECO:0000353"/>
    <property type="project" value="UniProtKB"/>
</dbReference>
<dbReference type="GO" id="GO:0060090">
    <property type="term" value="F:molecular adaptor activity"/>
    <property type="evidence" value="ECO:0000314"/>
    <property type="project" value="UniProt"/>
</dbReference>
<dbReference type="GO" id="GO:0003713">
    <property type="term" value="F:transcription coactivator activity"/>
    <property type="evidence" value="ECO:0000315"/>
    <property type="project" value="BHF-UCL"/>
</dbReference>
<dbReference type="GO" id="GO:0031625">
    <property type="term" value="F:ubiquitin protein ligase binding"/>
    <property type="evidence" value="ECO:0000353"/>
    <property type="project" value="UniProtKB"/>
</dbReference>
<dbReference type="GO" id="GO:0002031">
    <property type="term" value="P:G protein-coupled receptor internalization"/>
    <property type="evidence" value="ECO:0000315"/>
    <property type="project" value="UniProtKB"/>
</dbReference>
<dbReference type="GO" id="GO:0032715">
    <property type="term" value="P:negative regulation of interleukin-6 production"/>
    <property type="evidence" value="ECO:0000314"/>
    <property type="project" value="UniProtKB"/>
</dbReference>
<dbReference type="GO" id="GO:0032717">
    <property type="term" value="P:negative regulation of interleukin-8 production"/>
    <property type="evidence" value="ECO:0000314"/>
    <property type="project" value="UniProtKB"/>
</dbReference>
<dbReference type="GO" id="GO:0032088">
    <property type="term" value="P:negative regulation of NF-kappaB transcription factor activity"/>
    <property type="evidence" value="ECO:0000314"/>
    <property type="project" value="UniProtKB"/>
</dbReference>
<dbReference type="GO" id="GO:0045746">
    <property type="term" value="P:negative regulation of Notch signaling pathway"/>
    <property type="evidence" value="ECO:0000315"/>
    <property type="project" value="UniProtKB"/>
</dbReference>
<dbReference type="GO" id="GO:0031397">
    <property type="term" value="P:negative regulation of protein ubiquitination"/>
    <property type="evidence" value="ECO:0000314"/>
    <property type="project" value="UniProtKB"/>
</dbReference>
<dbReference type="GO" id="GO:0010613">
    <property type="term" value="P:positive regulation of cardiac muscle hypertrophy"/>
    <property type="evidence" value="ECO:0000305"/>
    <property type="project" value="UniProt"/>
</dbReference>
<dbReference type="GO" id="GO:0070374">
    <property type="term" value="P:positive regulation of ERK1 and ERK2 cascade"/>
    <property type="evidence" value="ECO:0000314"/>
    <property type="project" value="UniProtKB"/>
</dbReference>
<dbReference type="GO" id="GO:0001934">
    <property type="term" value="P:positive regulation of protein phosphorylation"/>
    <property type="evidence" value="ECO:0000315"/>
    <property type="project" value="UniProtKB"/>
</dbReference>
<dbReference type="GO" id="GO:0002092">
    <property type="term" value="P:positive regulation of receptor internalization"/>
    <property type="evidence" value="ECO:0000315"/>
    <property type="project" value="UniProtKB"/>
</dbReference>
<dbReference type="GO" id="GO:0035025">
    <property type="term" value="P:positive regulation of Rho protein signal transduction"/>
    <property type="evidence" value="ECO:0000315"/>
    <property type="project" value="UniProtKB"/>
</dbReference>
<dbReference type="GO" id="GO:0045944">
    <property type="term" value="P:positive regulation of transcription by RNA polymerase II"/>
    <property type="evidence" value="ECO:0000315"/>
    <property type="project" value="BHF-UCL"/>
</dbReference>
<dbReference type="GO" id="GO:0043161">
    <property type="term" value="P:proteasome-mediated ubiquitin-dependent protein catabolic process"/>
    <property type="evidence" value="ECO:0000315"/>
    <property type="project" value="UniProtKB"/>
</dbReference>
<dbReference type="GO" id="GO:0015031">
    <property type="term" value="P:protein transport"/>
    <property type="evidence" value="ECO:0007669"/>
    <property type="project" value="UniProtKB-KW"/>
</dbReference>
<dbReference type="GO" id="GO:0016567">
    <property type="term" value="P:protein ubiquitination"/>
    <property type="evidence" value="ECO:0000315"/>
    <property type="project" value="UniProtKB"/>
</dbReference>
<dbReference type="GO" id="GO:0006357">
    <property type="term" value="P:regulation of transcription by RNA polymerase II"/>
    <property type="evidence" value="ECO:0000315"/>
    <property type="project" value="UniProtKB"/>
</dbReference>
<dbReference type="GO" id="GO:0007165">
    <property type="term" value="P:signal transduction"/>
    <property type="evidence" value="ECO:0007669"/>
    <property type="project" value="InterPro"/>
</dbReference>
<dbReference type="GO" id="GO:0043149">
    <property type="term" value="P:stress fiber assembly"/>
    <property type="evidence" value="ECO:0000315"/>
    <property type="project" value="UniProtKB"/>
</dbReference>
<dbReference type="GO" id="GO:0006511">
    <property type="term" value="P:ubiquitin-dependent protein catabolic process"/>
    <property type="evidence" value="ECO:0000315"/>
    <property type="project" value="UniProtKB"/>
</dbReference>
<dbReference type="FunFam" id="2.60.40.640:FF:000003">
    <property type="entry name" value="beta-arrestin-1 isoform X1"/>
    <property type="match status" value="1"/>
</dbReference>
<dbReference type="FunFam" id="2.60.40.840:FF:000001">
    <property type="entry name" value="beta-arrestin-1 isoform X1"/>
    <property type="match status" value="1"/>
</dbReference>
<dbReference type="Gene3D" id="2.60.40.640">
    <property type="match status" value="1"/>
</dbReference>
<dbReference type="Gene3D" id="2.60.40.840">
    <property type="match status" value="1"/>
</dbReference>
<dbReference type="InterPro" id="IPR000698">
    <property type="entry name" value="Arrestin"/>
</dbReference>
<dbReference type="InterPro" id="IPR014752">
    <property type="entry name" value="Arrestin-like_C"/>
</dbReference>
<dbReference type="InterPro" id="IPR011021">
    <property type="entry name" value="Arrestin-like_N"/>
</dbReference>
<dbReference type="InterPro" id="IPR011022">
    <property type="entry name" value="Arrestin_C-like"/>
</dbReference>
<dbReference type="InterPro" id="IPR017864">
    <property type="entry name" value="Arrestin_CS"/>
</dbReference>
<dbReference type="InterPro" id="IPR014753">
    <property type="entry name" value="Arrestin_N"/>
</dbReference>
<dbReference type="InterPro" id="IPR014756">
    <property type="entry name" value="Ig_E-set"/>
</dbReference>
<dbReference type="PANTHER" id="PTHR11792">
    <property type="entry name" value="ARRESTIN"/>
    <property type="match status" value="1"/>
</dbReference>
<dbReference type="PANTHER" id="PTHR11792:SF22">
    <property type="entry name" value="BETA-ARRESTIN-1"/>
    <property type="match status" value="1"/>
</dbReference>
<dbReference type="Pfam" id="PF02752">
    <property type="entry name" value="Arrestin_C"/>
    <property type="match status" value="1"/>
</dbReference>
<dbReference type="Pfam" id="PF00339">
    <property type="entry name" value="Arrestin_N"/>
    <property type="match status" value="1"/>
</dbReference>
<dbReference type="PRINTS" id="PR00309">
    <property type="entry name" value="ARRESTIN"/>
</dbReference>
<dbReference type="SMART" id="SM01017">
    <property type="entry name" value="Arrestin_C"/>
    <property type="match status" value="1"/>
</dbReference>
<dbReference type="SUPFAM" id="SSF81296">
    <property type="entry name" value="E set domains"/>
    <property type="match status" value="2"/>
</dbReference>
<dbReference type="PROSITE" id="PS00295">
    <property type="entry name" value="ARRESTINS"/>
    <property type="match status" value="1"/>
</dbReference>
<gene>
    <name type="primary">ARRB1</name>
    <name type="synonym">ARR1</name>
</gene>
<sequence length="418" mass="47066">MGDKGTRVFKKASPNGKLTVYLGKRDFVDHIDLVDPVDGVVLVDPEYLKERRVYVTLTCAFRYGREDLDVLGLTFRKDLFVANVQSFPPAPEDKKPLTRLQERLIKKLGEHAYPFTFEIPPNLPCSVTLQPGPEDTGKACGVDYEVKAFCAENLEEKIHKRNSVRLVIRKVQYAPERPGPQPTAETTRQFLMSDKPLHLEASLDKEIYYHGEPISVNVHVTNNTNKTVKKIKISVRQYADICLFNTAQYKCPVAMEEADDTVAPSSTFCKVYTLTPFLANNREKRGLALDGKLKHEDTNLASSTLLREGANREILGIIVSYKVKVKLVVSRGGLLGDLASSDVAVELPFTLMHPKPKEEPPHREVPENETPVDTNLIELDTNDDDIVFEDFARQRLKGMKDDKEEEEDGTGSPQLNNR</sequence>
<feature type="chain" id="PRO_0000205194" description="Beta-arrestin-1">
    <location>
        <begin position="1"/>
        <end position="418"/>
    </location>
</feature>
<feature type="region of interest" description="Interaction with SRC" evidence="1">
    <location>
        <begin position="1"/>
        <end position="163"/>
    </location>
</feature>
<feature type="region of interest" description="Interaction with CHRM2" evidence="1">
    <location>
        <begin position="45"/>
        <end position="86"/>
    </location>
</feature>
<feature type="region of interest" description="Interaction with TRAF6" evidence="15">
    <location>
        <begin position="318"/>
        <end position="418"/>
    </location>
</feature>
<feature type="region of interest" description="Disordered" evidence="3">
    <location>
        <begin position="353"/>
        <end position="375"/>
    </location>
</feature>
<feature type="region of interest" description="Disordered" evidence="3">
    <location>
        <begin position="397"/>
        <end position="418"/>
    </location>
</feature>
<feature type="short sequence motif" description="[DE]-X(1,2)-F-X-X-[FL]-X-X-X-R motif">
    <location>
        <begin position="385"/>
        <end position="395"/>
    </location>
</feature>
<feature type="compositionally biased region" description="Basic and acidic residues" evidence="3">
    <location>
        <begin position="355"/>
        <end position="366"/>
    </location>
</feature>
<feature type="binding site" evidence="1">
    <location>
        <position position="250"/>
    </location>
    <ligand>
        <name>1D-myo-inositol hexakisphosphate</name>
        <dbReference type="ChEBI" id="CHEBI:58130"/>
    </ligand>
</feature>
<feature type="binding site" evidence="1">
    <location>
        <position position="255"/>
    </location>
    <ligand>
        <name>1D-myo-inositol hexakisphosphate</name>
        <dbReference type="ChEBI" id="CHEBI:58130"/>
    </ligand>
</feature>
<feature type="binding site" evidence="1">
    <location>
        <position position="324"/>
    </location>
    <ligand>
        <name>1D-myo-inositol hexakisphosphate</name>
        <dbReference type="ChEBI" id="CHEBI:58130"/>
    </ligand>
</feature>
<feature type="binding site" evidence="1">
    <location>
        <position position="326"/>
    </location>
    <ligand>
        <name>1D-myo-inositol hexakisphosphate</name>
        <dbReference type="ChEBI" id="CHEBI:58130"/>
    </ligand>
</feature>
<feature type="modified residue" description="Phosphotyrosine" evidence="2">
    <location>
        <position position="47"/>
    </location>
</feature>
<feature type="modified residue" description="Phosphoserine; by GRK5" evidence="27 41 42 43 44">
    <location>
        <position position="412"/>
    </location>
</feature>
<feature type="splice variant" id="VSP_000322" description="In isoform 1B." evidence="37 38 39">
    <location>
        <begin position="334"/>
        <end position="341"/>
    </location>
</feature>
<feature type="mutagenesis site" description="Constitutive active; enables phosphorylation-independent binding to GPCRs." evidence="4">
    <original>R</original>
    <variation>E</variation>
    <location>
        <position position="169"/>
    </location>
</feature>
<feature type="mutagenesis site" description="Abolishes interaction with AP2B1." evidence="17">
    <original>F</original>
    <variation>A</variation>
    <location>
        <position position="388"/>
    </location>
</feature>
<feature type="mutagenesis site" description="Abolishes interaction with AP2B1." evidence="17">
    <original>D</original>
    <variation>P</variation>
    <location>
        <position position="390"/>
    </location>
</feature>
<feature type="mutagenesis site" description="Abolishes interaction with AP2B1." evidence="17">
    <original>R</original>
    <variation>A</variation>
    <location>
        <position position="393"/>
    </location>
</feature>
<feature type="sequence conflict" description="In Ref. 1; AAA35559/AAA35558." evidence="40" ref="1">
    <original>V</original>
    <variation>A</variation>
    <location>
        <position position="146"/>
    </location>
</feature>
<feature type="sequence conflict" description="In Ref. 1; AAA35559/AAA35558." evidence="40" ref="1">
    <original>R</original>
    <variation>G</variation>
    <location>
        <position position="165"/>
    </location>
</feature>
<feature type="sequence conflict" description="In Ref. 1; AAA35559/AAA35558." evidence="40" ref="1">
    <original>K</original>
    <variation>E</variation>
    <location>
        <position position="229"/>
    </location>
</feature>
<feature type="sequence conflict" description="In Ref. 2; AAC33295/AAC34123." evidence="40" ref="2">
    <original>V</original>
    <variation>E</variation>
    <location>
        <position position="329"/>
    </location>
</feature>
<feature type="sequence conflict" description="In Ref. 1; AAA35559/AAA35558." evidence="40" ref="1">
    <original>K</original>
    <variation>E</variation>
    <location>
        <position position="400"/>
    </location>
</feature>
<feature type="sequence conflict" description="In Ref. 1; AAA35559/AAA35558." evidence="40" ref="1">
    <original>Q</original>
    <variation>R</variation>
    <location>
        <position position="414"/>
    </location>
</feature>
<feature type="sequence conflict" description="In Ref. 1; AAA35559/AAA35558." evidence="40" ref="1">
    <original>N</original>
    <variation>D</variation>
    <location>
        <position position="417"/>
    </location>
</feature>
<feature type="strand" evidence="49">
    <location>
        <begin position="7"/>
        <end position="12"/>
    </location>
</feature>
<feature type="strand" evidence="49">
    <location>
        <begin position="16"/>
        <end position="23"/>
    </location>
</feature>
<feature type="strand" evidence="49">
    <location>
        <begin position="25"/>
        <end position="29"/>
    </location>
</feature>
<feature type="strand" evidence="45">
    <location>
        <begin position="31"/>
        <end position="33"/>
    </location>
</feature>
<feature type="strand" evidence="49">
    <location>
        <begin position="37"/>
        <end position="43"/>
    </location>
</feature>
<feature type="helix" evidence="49">
    <location>
        <begin position="45"/>
        <end position="48"/>
    </location>
</feature>
<feature type="strand" evidence="49">
    <location>
        <begin position="52"/>
        <end position="64"/>
    </location>
</feature>
<feature type="helix" evidence="46">
    <location>
        <begin position="66"/>
        <end position="70"/>
    </location>
</feature>
<feature type="strand" evidence="49">
    <location>
        <begin position="74"/>
        <end position="87"/>
    </location>
</feature>
<feature type="turn" evidence="45">
    <location>
        <begin position="91"/>
        <end position="93"/>
    </location>
</feature>
<feature type="helix" evidence="49">
    <location>
        <begin position="99"/>
        <end position="108"/>
    </location>
</feature>
<feature type="strand" evidence="49">
    <location>
        <begin position="112"/>
        <end position="117"/>
    </location>
</feature>
<feature type="strand" evidence="49">
    <location>
        <begin position="127"/>
        <end position="130"/>
    </location>
</feature>
<feature type="strand" evidence="49">
    <location>
        <begin position="140"/>
        <end position="152"/>
    </location>
</feature>
<feature type="strand" evidence="49">
    <location>
        <begin position="154"/>
        <end position="156"/>
    </location>
</feature>
<feature type="helix" evidence="49">
    <location>
        <begin position="160"/>
        <end position="162"/>
    </location>
</feature>
<feature type="strand" evidence="49">
    <location>
        <begin position="163"/>
        <end position="166"/>
    </location>
</feature>
<feature type="strand" evidence="49">
    <location>
        <begin position="169"/>
        <end position="172"/>
    </location>
</feature>
<feature type="strand" evidence="49">
    <location>
        <begin position="185"/>
        <end position="189"/>
    </location>
</feature>
<feature type="strand" evidence="49">
    <location>
        <begin position="191"/>
        <end position="195"/>
    </location>
</feature>
<feature type="strand" evidence="49">
    <location>
        <begin position="197"/>
        <end position="204"/>
    </location>
</feature>
<feature type="strand" evidence="49">
    <location>
        <begin position="206"/>
        <end position="209"/>
    </location>
</feature>
<feature type="strand" evidence="49">
    <location>
        <begin position="214"/>
        <end position="222"/>
    </location>
</feature>
<feature type="strand" evidence="45">
    <location>
        <begin position="224"/>
        <end position="226"/>
    </location>
</feature>
<feature type="strand" evidence="49">
    <location>
        <begin position="228"/>
        <end position="241"/>
    </location>
</feature>
<feature type="strand" evidence="49">
    <location>
        <begin position="243"/>
        <end position="245"/>
    </location>
</feature>
<feature type="strand" evidence="49">
    <location>
        <begin position="247"/>
        <end position="258"/>
    </location>
</feature>
<feature type="strand" evidence="49">
    <location>
        <begin position="266"/>
        <end position="274"/>
    </location>
</feature>
<feature type="helix" evidence="49">
    <location>
        <begin position="278"/>
        <end position="281"/>
    </location>
</feature>
<feature type="strand" evidence="49">
    <location>
        <begin position="285"/>
        <end position="291"/>
    </location>
</feature>
<feature type="strand" evidence="47">
    <location>
        <begin position="293"/>
        <end position="295"/>
    </location>
</feature>
<feature type="helix" evidence="49">
    <location>
        <begin position="313"/>
        <end position="315"/>
    </location>
</feature>
<feature type="strand" evidence="49">
    <location>
        <begin position="316"/>
        <end position="329"/>
    </location>
</feature>
<feature type="helix" evidence="47">
    <location>
        <begin position="333"/>
        <end position="335"/>
    </location>
</feature>
<feature type="turn" evidence="48">
    <location>
        <begin position="336"/>
        <end position="338"/>
    </location>
</feature>
<feature type="strand" evidence="49">
    <location>
        <begin position="341"/>
        <end position="352"/>
    </location>
</feature>
<feature type="strand" evidence="46">
    <location>
        <begin position="365"/>
        <end position="367"/>
    </location>
</feature>
<feature type="strand" evidence="49">
    <location>
        <begin position="387"/>
        <end position="392"/>
    </location>
</feature>